<name>LYRM2_SALSA</name>
<feature type="transit peptide" description="Mitochondrion" evidence="2">
    <location>
        <begin position="1"/>
        <end position="19"/>
    </location>
</feature>
<feature type="chain" id="PRO_0000370330" description="LYR motif-containing protein 2">
    <location>
        <begin position="20"/>
        <end position="90"/>
    </location>
</feature>
<feature type="sequence conflict" description="In Ref. 1; ACI66454." evidence="3" ref="1">
    <original>R</original>
    <variation>K</variation>
    <location>
        <position position="27"/>
    </location>
</feature>
<proteinExistence type="inferred from homology"/>
<dbReference type="EMBL" id="BT046653">
    <property type="protein sequence ID" value="ACI66454.1"/>
    <property type="status" value="ALT_INIT"/>
    <property type="molecule type" value="mRNA"/>
</dbReference>
<dbReference type="EMBL" id="BT049726">
    <property type="protein sequence ID" value="ACI69527.1"/>
    <property type="molecule type" value="mRNA"/>
</dbReference>
<dbReference type="RefSeq" id="NP_001134168.1">
    <property type="nucleotide sequence ID" value="NM_001140696.1"/>
</dbReference>
<dbReference type="SMR" id="B5XFA7"/>
<dbReference type="STRING" id="8030.ENSSSAP00000032336"/>
<dbReference type="PaxDb" id="8030-ENSSSAP00000032336"/>
<dbReference type="GeneID" id="100195667"/>
<dbReference type="KEGG" id="sasa:100195667"/>
<dbReference type="CTD" id="57226"/>
<dbReference type="OrthoDB" id="524045at7898"/>
<dbReference type="Proteomes" id="UP000087266">
    <property type="component" value="Chromosome ssa06"/>
</dbReference>
<dbReference type="GO" id="GO:0005739">
    <property type="term" value="C:mitochondrion"/>
    <property type="evidence" value="ECO:0007669"/>
    <property type="project" value="UniProtKB-SubCell"/>
</dbReference>
<dbReference type="GO" id="GO:0032981">
    <property type="term" value="P:mitochondrial respiratory chain complex I assembly"/>
    <property type="evidence" value="ECO:0000250"/>
    <property type="project" value="UniProtKB"/>
</dbReference>
<dbReference type="CDD" id="cd20262">
    <property type="entry name" value="Complex1_LYR_LYRM2"/>
    <property type="match status" value="1"/>
</dbReference>
<dbReference type="InterPro" id="IPR008011">
    <property type="entry name" value="Complex1_LYR_dom"/>
</dbReference>
<dbReference type="InterPro" id="IPR045293">
    <property type="entry name" value="Complex1_LYR_LYRM2"/>
</dbReference>
<dbReference type="PANTHER" id="PTHR13675">
    <property type="entry name" value="LYR MOTIF-CONTAINING PROTEIN 2"/>
    <property type="match status" value="1"/>
</dbReference>
<dbReference type="PANTHER" id="PTHR13675:SF0">
    <property type="entry name" value="LYR MOTIF-CONTAINING PROTEIN 2"/>
    <property type="match status" value="1"/>
</dbReference>
<dbReference type="Pfam" id="PF05347">
    <property type="entry name" value="Complex1_LYR"/>
    <property type="match status" value="1"/>
</dbReference>
<comment type="function">
    <text evidence="1">Involved in efficient integration of the N-module into mitochondrial respiratory chain complex I.</text>
</comment>
<comment type="subcellular location">
    <subcellularLocation>
        <location evidence="1">Mitochondrion</location>
    </subcellularLocation>
</comment>
<comment type="similarity">
    <text evidence="3">Belongs to the complex I LYR family.</text>
</comment>
<comment type="sequence caution" evidence="3">
    <conflict type="erroneous initiation">
        <sequence resource="EMBL-CDS" id="ACI66454"/>
    </conflict>
    <text>Extended N-terminus.</text>
</comment>
<gene>
    <name type="primary">lyrm2</name>
</gene>
<organism>
    <name type="scientific">Salmo salar</name>
    <name type="common">Atlantic salmon</name>
    <dbReference type="NCBI Taxonomy" id="8030"/>
    <lineage>
        <taxon>Eukaryota</taxon>
        <taxon>Metazoa</taxon>
        <taxon>Chordata</taxon>
        <taxon>Craniata</taxon>
        <taxon>Vertebrata</taxon>
        <taxon>Euteleostomi</taxon>
        <taxon>Actinopterygii</taxon>
        <taxon>Neopterygii</taxon>
        <taxon>Teleostei</taxon>
        <taxon>Protacanthopterygii</taxon>
        <taxon>Salmoniformes</taxon>
        <taxon>Salmonidae</taxon>
        <taxon>Salmoninae</taxon>
        <taxon>Salmo</taxon>
    </lineage>
</organism>
<keyword id="KW-0496">Mitochondrion</keyword>
<keyword id="KW-1185">Reference proteome</keyword>
<keyword id="KW-0809">Transit peptide</keyword>
<sequence>MASSRLPASALTLKQFIQRQKVLSLYRNMMRTIRQVPDEGDRKYLRDWARDEFKRNKNSTNQDAIRMMITQANMHHDELQSSLALANVKK</sequence>
<evidence type="ECO:0000250" key="1">
    <source>
        <dbReference type="UniProtKB" id="Q9NU23"/>
    </source>
</evidence>
<evidence type="ECO:0000255" key="2"/>
<evidence type="ECO:0000305" key="3"/>
<protein>
    <recommendedName>
        <fullName>LYR motif-containing protein 2</fullName>
    </recommendedName>
</protein>
<reference key="1">
    <citation type="journal article" date="2010" name="BMC Genomics">
        <title>Salmo salar and Esox lucius full-length cDNA sequences reveal changes in evolutionary pressures on a post-tetraploidization genome.</title>
        <authorList>
            <person name="Leong J.S."/>
            <person name="Jantzen S.G."/>
            <person name="von Schalburg K.R."/>
            <person name="Cooper G.A."/>
            <person name="Messmer A.M."/>
            <person name="Liao N.Y."/>
            <person name="Munro S."/>
            <person name="Moore R."/>
            <person name="Holt R.A."/>
            <person name="Jones S.J."/>
            <person name="Davidson W.S."/>
            <person name="Koop B.F."/>
        </authorList>
    </citation>
    <scope>NUCLEOTIDE SEQUENCE [LARGE SCALE MRNA]</scope>
    <source>
        <tissue>Brain</tissue>
    </source>
</reference>
<accession>B5XFA7</accession>
<accession>B5X6I4</accession>